<dbReference type="EC" id="2.4.2.10" evidence="1"/>
<dbReference type="EMBL" id="CP000792">
    <property type="protein sequence ID" value="EAT99095.1"/>
    <property type="molecule type" value="Genomic_DNA"/>
</dbReference>
<dbReference type="RefSeq" id="WP_012140675.1">
    <property type="nucleotide sequence ID" value="NC_009802.2"/>
</dbReference>
<dbReference type="SMR" id="A7ZGD3"/>
<dbReference type="STRING" id="360104.CCC13826_1866"/>
<dbReference type="KEGG" id="cco:CCC13826_1866"/>
<dbReference type="eggNOG" id="COG0461">
    <property type="taxonomic scope" value="Bacteria"/>
</dbReference>
<dbReference type="HOGENOM" id="CLU_074878_3_0_7"/>
<dbReference type="OrthoDB" id="9783570at2"/>
<dbReference type="UniPathway" id="UPA00070">
    <property type="reaction ID" value="UER00119"/>
</dbReference>
<dbReference type="Proteomes" id="UP000001121">
    <property type="component" value="Chromosome"/>
</dbReference>
<dbReference type="GO" id="GO:0000287">
    <property type="term" value="F:magnesium ion binding"/>
    <property type="evidence" value="ECO:0007669"/>
    <property type="project" value="UniProtKB-UniRule"/>
</dbReference>
<dbReference type="GO" id="GO:0004588">
    <property type="term" value="F:orotate phosphoribosyltransferase activity"/>
    <property type="evidence" value="ECO:0007669"/>
    <property type="project" value="UniProtKB-UniRule"/>
</dbReference>
<dbReference type="GO" id="GO:0044205">
    <property type="term" value="P:'de novo' UMP biosynthetic process"/>
    <property type="evidence" value="ECO:0007669"/>
    <property type="project" value="UniProtKB-UniRule"/>
</dbReference>
<dbReference type="GO" id="GO:0019856">
    <property type="term" value="P:pyrimidine nucleobase biosynthetic process"/>
    <property type="evidence" value="ECO:0007669"/>
    <property type="project" value="InterPro"/>
</dbReference>
<dbReference type="CDD" id="cd06223">
    <property type="entry name" value="PRTases_typeI"/>
    <property type="match status" value="1"/>
</dbReference>
<dbReference type="Gene3D" id="3.40.50.2020">
    <property type="match status" value="1"/>
</dbReference>
<dbReference type="HAMAP" id="MF_01208">
    <property type="entry name" value="PyrE"/>
    <property type="match status" value="1"/>
</dbReference>
<dbReference type="InterPro" id="IPR023031">
    <property type="entry name" value="OPRT"/>
</dbReference>
<dbReference type="InterPro" id="IPR006273">
    <property type="entry name" value="Orotate_PRibTrfase_bac"/>
</dbReference>
<dbReference type="InterPro" id="IPR000836">
    <property type="entry name" value="PRibTrfase_dom"/>
</dbReference>
<dbReference type="InterPro" id="IPR029057">
    <property type="entry name" value="PRTase-like"/>
</dbReference>
<dbReference type="NCBIfam" id="TIGR01367">
    <property type="entry name" value="pyrE_Therm"/>
    <property type="match status" value="1"/>
</dbReference>
<dbReference type="PANTHER" id="PTHR19278">
    <property type="entry name" value="OROTATE PHOSPHORIBOSYLTRANSFERASE"/>
    <property type="match status" value="1"/>
</dbReference>
<dbReference type="PANTHER" id="PTHR19278:SF9">
    <property type="entry name" value="URIDINE 5'-MONOPHOSPHATE SYNTHASE"/>
    <property type="match status" value="1"/>
</dbReference>
<dbReference type="Pfam" id="PF00156">
    <property type="entry name" value="Pribosyltran"/>
    <property type="match status" value="1"/>
</dbReference>
<dbReference type="SUPFAM" id="SSF53271">
    <property type="entry name" value="PRTase-like"/>
    <property type="match status" value="1"/>
</dbReference>
<dbReference type="PROSITE" id="PS00103">
    <property type="entry name" value="PUR_PYR_PR_TRANSFER"/>
    <property type="match status" value="1"/>
</dbReference>
<comment type="function">
    <text evidence="1">Catalyzes the transfer of a ribosyl phosphate group from 5-phosphoribose 1-diphosphate to orotate, leading to the formation of orotidine monophosphate (OMP).</text>
</comment>
<comment type="catalytic activity">
    <reaction evidence="1">
        <text>orotidine 5'-phosphate + diphosphate = orotate + 5-phospho-alpha-D-ribose 1-diphosphate</text>
        <dbReference type="Rhea" id="RHEA:10380"/>
        <dbReference type="ChEBI" id="CHEBI:30839"/>
        <dbReference type="ChEBI" id="CHEBI:33019"/>
        <dbReference type="ChEBI" id="CHEBI:57538"/>
        <dbReference type="ChEBI" id="CHEBI:58017"/>
        <dbReference type="EC" id="2.4.2.10"/>
    </reaction>
</comment>
<comment type="cofactor">
    <cofactor evidence="1">
        <name>Mg(2+)</name>
        <dbReference type="ChEBI" id="CHEBI:18420"/>
    </cofactor>
</comment>
<comment type="pathway">
    <text evidence="1">Pyrimidine metabolism; UMP biosynthesis via de novo pathway; UMP from orotate: step 1/2.</text>
</comment>
<comment type="subunit">
    <text evidence="1">Homodimer.</text>
</comment>
<comment type="similarity">
    <text evidence="1">Belongs to the purine/pyrimidine phosphoribosyltransferase family. PyrE subfamily.</text>
</comment>
<protein>
    <recommendedName>
        <fullName evidence="1">Orotate phosphoribosyltransferase</fullName>
        <shortName evidence="1">OPRT</shortName>
        <shortName evidence="1">OPRTase</shortName>
        <ecNumber evidence="1">2.4.2.10</ecNumber>
    </recommendedName>
</protein>
<accession>A7ZGD3</accession>
<gene>
    <name evidence="1" type="primary">pyrE</name>
    <name type="ordered locus">Ccon26_20120</name>
    <name type="ORF">CCC13826_1866</name>
</gene>
<evidence type="ECO:0000255" key="1">
    <source>
        <dbReference type="HAMAP-Rule" id="MF_01208"/>
    </source>
</evidence>
<sequence>MDLEKIYKDAGAYLEGHFLLSSGNHSQFYLQSAKVLEDPALAGKLADELAAVIEKFGIKFDSVCSPALGGILAGYELARAAKKRFIFTERVEKVMSLRRGFEVKKGEKFIVCEDIITTGGSALEAAHVIESLGGEVVGFAALANRGFCKVANLGNDSKPNAKLPSDKPFFALGNFEFEIYEPEHCPLCKSGSKAIKPGSRGN</sequence>
<keyword id="KW-0328">Glycosyltransferase</keyword>
<keyword id="KW-0460">Magnesium</keyword>
<keyword id="KW-0665">Pyrimidine biosynthesis</keyword>
<keyword id="KW-0808">Transferase</keyword>
<name>PYRE_CAMC1</name>
<organism>
    <name type="scientific">Campylobacter concisus (strain 13826)</name>
    <dbReference type="NCBI Taxonomy" id="360104"/>
    <lineage>
        <taxon>Bacteria</taxon>
        <taxon>Pseudomonadati</taxon>
        <taxon>Campylobacterota</taxon>
        <taxon>Epsilonproteobacteria</taxon>
        <taxon>Campylobacterales</taxon>
        <taxon>Campylobacteraceae</taxon>
        <taxon>Campylobacter</taxon>
    </lineage>
</organism>
<proteinExistence type="inferred from homology"/>
<reference key="1">
    <citation type="submission" date="2007-10" db="EMBL/GenBank/DDBJ databases">
        <title>Genome sequence of Campylobacter concisus 13826 isolated from human feces.</title>
        <authorList>
            <person name="Fouts D.E."/>
            <person name="Mongodin E.F."/>
            <person name="Puiu D."/>
            <person name="Sebastian Y."/>
            <person name="Miller W.G."/>
            <person name="Mandrell R.E."/>
            <person name="On S."/>
            <person name="Nelson K.E."/>
        </authorList>
    </citation>
    <scope>NUCLEOTIDE SEQUENCE [LARGE SCALE GENOMIC DNA]</scope>
    <source>
        <strain>13826</strain>
    </source>
</reference>
<feature type="chain" id="PRO_1000073105" description="Orotate phosphoribosyltransferase">
    <location>
        <begin position="1"/>
        <end position="202"/>
    </location>
</feature>
<feature type="binding site" evidence="1">
    <location>
        <position position="93"/>
    </location>
    <ligand>
        <name>5-phospho-alpha-D-ribose 1-diphosphate</name>
        <dbReference type="ChEBI" id="CHEBI:58017"/>
        <note>ligand shared between dimeric partners</note>
    </ligand>
</feature>
<feature type="binding site" description="in other chain" evidence="1">
    <location>
        <begin position="113"/>
        <end position="121"/>
    </location>
    <ligand>
        <name>5-phospho-alpha-D-ribose 1-diphosphate</name>
        <dbReference type="ChEBI" id="CHEBI:58017"/>
        <note>ligand shared between dimeric partners</note>
    </ligand>
</feature>
<feature type="binding site" evidence="1">
    <location>
        <position position="117"/>
    </location>
    <ligand>
        <name>orotate</name>
        <dbReference type="ChEBI" id="CHEBI:30839"/>
    </ligand>
</feature>
<feature type="binding site" evidence="1">
    <location>
        <position position="145"/>
    </location>
    <ligand>
        <name>orotate</name>
        <dbReference type="ChEBI" id="CHEBI:30839"/>
    </ligand>
</feature>